<gene>
    <name evidence="8" type="primary">Rufy3</name>
    <name evidence="2" type="synonym">Ripx</name>
</gene>
<reference key="1">
    <citation type="journal article" date="2007" name="J. Biol. Chem.">
        <title>Singar1, a novel RUN domain-containing protein, suppresses formation of surplus axons for neuronal polarity.</title>
        <authorList>
            <person name="Mori T."/>
            <person name="Wada T."/>
            <person name="Suzuki T."/>
            <person name="Kubota Y."/>
            <person name="Inagaki N."/>
        </authorList>
    </citation>
    <scope>NUCLEOTIDE SEQUENCE [MRNA] (ISOFORMS 1 AND 2)</scope>
    <scope>PROTEIN SEQUENCE OF 82-92; 139-151; 265-284; 306-328; 348-356 AND 403-411</scope>
    <scope>FUNCTION</scope>
    <scope>SUBCELLULAR LOCATION</scope>
    <scope>PHOSPHORYLATION (ISOFORM 1)</scope>
    <scope>TISSUE SPECIFICITY</scope>
    <scope>DEVELOPMENTAL STAGE</scope>
    <scope>INTERACTION WITH PIK3CA AND PIK3R1</scope>
    <scope>INDUCTION</scope>
    <scope>IDENTIFICATION BY MASS SPECTROMETRY</scope>
    <source>
        <strain>Wistar</strain>
        <tissue>Brain</tissue>
    </source>
</reference>
<reference key="2">
    <citation type="journal article" date="2004" name="Genome Res.">
        <title>The status, quality, and expansion of the NIH full-length cDNA project: the Mammalian Gene Collection (MGC).</title>
        <authorList>
            <consortium name="The MGC Project Team"/>
        </authorList>
    </citation>
    <scope>NUCLEOTIDE SEQUENCE [LARGE SCALE MRNA] (ISOFORM 1)</scope>
    <source>
        <tissue>Brain</tissue>
    </source>
</reference>
<reference key="3">
    <citation type="journal article" date="2012" name="Nat. Commun.">
        <title>Quantitative maps of protein phosphorylation sites across 14 different rat organs and tissues.</title>
        <authorList>
            <person name="Lundby A."/>
            <person name="Secher A."/>
            <person name="Lage K."/>
            <person name="Nordsborg N.B."/>
            <person name="Dmytriyev A."/>
            <person name="Lundby C."/>
            <person name="Olsen J.V."/>
        </authorList>
    </citation>
    <scope>PHOSPHORYLATION [LARGE SCALE ANALYSIS] AT THR-5; THR-12; SER-49 AND THR-51</scope>
    <scope>IDENTIFICATION BY MASS SPECTROMETRY [LARGE SCALE ANALYSIS]</scope>
</reference>
<feature type="chain" id="PRO_0000245836" description="Protein RUFY3">
    <location>
        <begin position="1"/>
        <end position="469"/>
    </location>
</feature>
<feature type="domain" description="RUN" evidence="4">
    <location>
        <begin position="95"/>
        <end position="227"/>
    </location>
</feature>
<feature type="coiled-coil region" evidence="3">
    <location>
        <begin position="271"/>
        <end position="362"/>
    </location>
</feature>
<feature type="coiled-coil region" evidence="3">
    <location>
        <begin position="422"/>
        <end position="463"/>
    </location>
</feature>
<feature type="modified residue" description="Phosphothreonine" evidence="9">
    <location>
        <position position="5"/>
    </location>
</feature>
<feature type="modified residue" description="Phosphothreonine" evidence="9">
    <location>
        <position position="12"/>
    </location>
</feature>
<feature type="modified residue" description="Phosphoserine" evidence="2">
    <location>
        <position position="34"/>
    </location>
</feature>
<feature type="modified residue" description="Phosphoserine" evidence="9">
    <location>
        <position position="49"/>
    </location>
</feature>
<feature type="modified residue" description="Phosphothreonine" evidence="9">
    <location>
        <position position="51"/>
    </location>
</feature>
<feature type="splice variant" id="VSP_026950" description="In isoform 2." evidence="6">
    <original>D</original>
    <variation>DSWEDLTDLVEQVRADPED</variation>
    <location>
        <position position="60"/>
    </location>
</feature>
<evidence type="ECO:0000250" key="1">
    <source>
        <dbReference type="UniProtKB" id="Q7L099"/>
    </source>
</evidence>
<evidence type="ECO:0000250" key="2">
    <source>
        <dbReference type="UniProtKB" id="Q9D394"/>
    </source>
</evidence>
<evidence type="ECO:0000255" key="3"/>
<evidence type="ECO:0000255" key="4">
    <source>
        <dbReference type="PROSITE-ProRule" id="PRU00178"/>
    </source>
</evidence>
<evidence type="ECO:0000269" key="5">
    <source>
    </source>
</evidence>
<evidence type="ECO:0000303" key="6">
    <source>
    </source>
</evidence>
<evidence type="ECO:0000305" key="7"/>
<evidence type="ECO:0000312" key="8">
    <source>
        <dbReference type="RGD" id="1565242"/>
    </source>
</evidence>
<evidence type="ECO:0007744" key="9">
    <source>
    </source>
</evidence>
<protein>
    <recommendedName>
        <fullName evidence="7">Protein RUFY3</fullName>
    </recommendedName>
    <alternativeName>
        <fullName evidence="8">RUN and FYVE domain-containing protein 3</fullName>
    </alternativeName>
    <alternativeName>
        <fullName evidence="2">Rap2-interacting protein x</fullName>
        <shortName evidence="2">RIPx</shortName>
    </alternativeName>
    <alternativeName>
        <fullName evidence="6">Single axon-regulated protein</fullName>
        <shortName evidence="6">Singar</shortName>
    </alternativeName>
</protein>
<proteinExistence type="evidence at protein level"/>
<name>RUFY3_RAT</name>
<comment type="function">
    <text evidence="1 2 5">ARL8 effector that promotes the coupling of endolysosomes to dynein-dynactin for retrograde transport along microtubules. Acts by binding both GTP-bound ARL8 and dynein-dynactin. In nonneuronal cells, promotes concentration of endolysosomes in the juxtanuclear area. In hippocampal neurons, drives retrograde transport of endolysosomes from the axon to the soma (By similarity). Plays a role in the generation of neuronal polarity formation and axon growth (PubMed:17439943). Implicated in the formation of a single axon by developing neurons (PubMed:17439943). May inhibit the formation of additional axons by inhibition of PI3K in minor neuronal processes (PubMed:17439943). Plays a role in the formation of F-actin-enriched protrusive structures at the cell periphery (By similarity). Plays a role in cytoskeletal organization by regulating the subcellular localization of FSCN1 and DBN1 at axonal growth cones (By similarity).</text>
</comment>
<comment type="subunit">
    <text evidence="1 2 5">Interacts with PAK1 (By similarity). Interacts (via C-terminus) with Ras-related Rab-5 proteins (By similarity). Interacts (via C-terminus) with Ras-related Rap-2 proteins (By similarity). Interacts with PIK3CA and PIK3R1 (PubMed:17439943). Interacts (via N-terminus) with FSCN1; this interaction induces neuron axon development (By similarity). Interacts with DBN1 (By similarity). Interacts (via the second coiled coil) with GTP-, but not GDP-bound ARL8A and ARL8B. Interacts with dynactin/DCTN1 and the dynein intermediate chain DYNC1I1/2. Directly interacts with DYNC1LI1 (By similarity).</text>
</comment>
<comment type="subcellular location">
    <subcellularLocation>
        <location evidence="1">Cytoplasm</location>
    </subcellularLocation>
    <subcellularLocation>
        <location evidence="1">Endomembrane system</location>
    </subcellularLocation>
    <subcellularLocation>
        <location evidence="1">Cell projection</location>
        <location evidence="1">Invadopodium</location>
    </subcellularLocation>
    <subcellularLocation>
        <location evidence="2">Cell projection</location>
        <location evidence="2">Growth cone</location>
    </subcellularLocation>
    <subcellularLocation>
        <location evidence="5">Perikaryon</location>
    </subcellularLocation>
    <subcellularLocation>
        <location evidence="5">Cell projection</location>
    </subcellularLocation>
    <subcellularLocation>
        <location evidence="2">Cell projection</location>
        <location evidence="2">Filopodium</location>
    </subcellularLocation>
    <subcellularLocation>
        <location evidence="2">Cell projection</location>
        <location evidence="2">Lamellipodium</location>
    </subcellularLocation>
    <subcellularLocation>
        <location evidence="1">Lysosome</location>
    </subcellularLocation>
    <text evidence="1 2 5">Colocalizes with PAK1, F-actin, myosins and integrins in invadopodia at the cell periphery (By similarity). Colocalizes with Ras-related Rab-5 proteins in cytoplasmic vesicles (By similarity). Accumulates in axon growth cones in a F-actin-dependent manner (By similarity). Colocalizes with FSCN1 and F-actin at filipodia and lamellipodia of axonal growth cones (By similarity). Localized in F-actin-enriched filopodia and lamellipodia at axonal growth cones (PubMed:17439943). Colocalizes with DBN1 and F-actin at transitional domain of the axonal growth cone (By similarity). Recruitment to endolysosomes partially depends upon the presence of ARL8 (By similarity).</text>
</comment>
<comment type="alternative products">
    <event type="alternative splicing"/>
    <isoform>
        <id>Q5FVJ0-1</id>
        <name>1</name>
        <name evidence="6">Singar1</name>
        <sequence type="displayed"/>
    </isoform>
    <isoform>
        <id>Q5FVJ0-2</id>
        <name>2</name>
        <name evidence="6">Singar2</name>
        <sequence type="described" ref="VSP_026950"/>
    </isoform>
</comment>
<comment type="tissue specificity">
    <text evidence="5">Expressed in brain (at protein level) (PubMed:17439943).</text>
</comment>
<comment type="developmental stage">
    <text evidence="5">Low level expression in brain up to 15 dpc, higher level expression from 18 dpc to P14 with highest level around P4 (PubMed:17439943). Low level expression in adult brain (PubMed:17439943). Low level expression in hippocampal neurons up to stage 2 in culture (PubMed:17439943). Higher level from stage 3 with highest level of isoform 1 on day 7 in vitro (DIV7) (PubMed:17439943). Phosphorylated isoform 1 from DIV7 with high level up to DIV28, isoform 2 detectable from stage 3 to DIV7 (PubMed:17439943).</text>
</comment>
<comment type="induction">
    <text evidence="5">Up-regulated during neuronal polarization (PubMed:17439943).</text>
</comment>
<comment type="domain">
    <text evidence="1">The second coiled coil domain is involved in the interaction with GTP-bound ARL8B.</text>
</comment>
<comment type="PTM">
    <text evidence="1 5">Isoform 1 is partially phosphorylated (PubMed:17439943). Phosphorylated by PAK1 (By similarity).</text>
</comment>
<comment type="miscellaneous">
    <text evidence="5">Hippocampal neurons with reduced levels of RUFY3 show an increase in formation of additional axons (PubMed:17439943). This effect is suppressed in the presence of the PI3K inhibitor LY294002 and enhanced by overexpression of SHTN1 (PubMed:17439943). Overexpression of RUFY3 suppresses additional axons formed upon overexpression of SHTN1 (PubMed:17439943).</text>
</comment>
<sequence>MSALTPPTDMPTPTTDKITQAAMETIYLCKFRVSMDGEWLCLRELDDISLTPDPEPTHEDPNYLMANERMNLMNMAKLSIKGLIESALNLGRTLDSDYAPLQQFFVVMEHCLKHGLKAKKTFLGQNKSFWGPLELVEKLVPEAAEITASVKDLPGLKTPVGRGRAWLRLALMQKKLSEYMKALINKKELLSEFYEANALMMEEEGAIIAGLLVGLNVIDANFCMKGEDLDSQVGVIDFSMYLKDGNSSKGSEGDGQITAILDQKNYVEELNRHLNATVNNLQAKVDALEKSNTKLTEELAVANNRIITLQEEMERVKEESSYLLESNRKGPKQDRTAEGQALSEARKHLKEETQLRLDVEKELELQISMRQEMELAMKMLEKDVCEKQDALVSLRQQLDDLRALKHELAFKLQSSDLGVKQKSELNSRLEEKTNQMAATIKQLEQSEKDLVKQAKTLNSAANKLIPKHH</sequence>
<accession>Q5FVJ0</accession>
<accession>A5HLX7</accession>
<accession>A5JUR6</accession>
<keyword id="KW-0025">Alternative splicing</keyword>
<keyword id="KW-0965">Cell junction</keyword>
<keyword id="KW-0966">Cell projection</keyword>
<keyword id="KW-0175">Coiled coil</keyword>
<keyword id="KW-0963">Cytoplasm</keyword>
<keyword id="KW-0217">Developmental protein</keyword>
<keyword id="KW-0221">Differentiation</keyword>
<keyword id="KW-0903">Direct protein sequencing</keyword>
<keyword id="KW-0458">Lysosome</keyword>
<keyword id="KW-0472">Membrane</keyword>
<keyword id="KW-0524">Neurogenesis</keyword>
<keyword id="KW-0553">Oncogene</keyword>
<keyword id="KW-0597">Phosphoprotein</keyword>
<keyword id="KW-1185">Reference proteome</keyword>
<dbReference type="EMBL" id="EF538802">
    <property type="protein sequence ID" value="ABP99060.1"/>
    <property type="molecule type" value="mRNA"/>
</dbReference>
<dbReference type="EMBL" id="EF577045">
    <property type="protein sequence ID" value="ABQ45403.1"/>
    <property type="molecule type" value="mRNA"/>
</dbReference>
<dbReference type="EMBL" id="BC089952">
    <property type="protein sequence ID" value="AAH89952.1"/>
    <property type="molecule type" value="mRNA"/>
</dbReference>
<dbReference type="RefSeq" id="NP_001020298.1">
    <molecule id="Q5FVJ0-1"/>
    <property type="nucleotide sequence ID" value="NM_001025127.2"/>
</dbReference>
<dbReference type="RefSeq" id="NP_001388544.1">
    <molecule id="Q5FVJ0-2"/>
    <property type="nucleotide sequence ID" value="NM_001401615.1"/>
</dbReference>
<dbReference type="RefSeq" id="XP_008768270.1">
    <property type="nucleotide sequence ID" value="XM_008770048.2"/>
</dbReference>
<dbReference type="SMR" id="Q5FVJ0"/>
<dbReference type="BioGRID" id="262306">
    <property type="interactions" value="2"/>
</dbReference>
<dbReference type="FunCoup" id="Q5FVJ0">
    <property type="interactions" value="1681"/>
</dbReference>
<dbReference type="STRING" id="10116.ENSRNOP00000073742"/>
<dbReference type="GlyGen" id="Q5FVJ0">
    <property type="glycosylation" value="1 site, 1 O-linked glycan (1 site)"/>
</dbReference>
<dbReference type="iPTMnet" id="Q5FVJ0"/>
<dbReference type="PhosphoSitePlus" id="Q5FVJ0"/>
<dbReference type="PaxDb" id="10116-ENSRNOP00000020608"/>
<dbReference type="ABCD" id="Q5FVJ0">
    <property type="antibodies" value="3 sequenced antibodies"/>
</dbReference>
<dbReference type="GeneID" id="360921"/>
<dbReference type="KEGG" id="rno:360921"/>
<dbReference type="UCSC" id="RGD:1565242">
    <molecule id="Q5FVJ0-1"/>
    <property type="organism name" value="rat"/>
</dbReference>
<dbReference type="AGR" id="RGD:1565242"/>
<dbReference type="CTD" id="22902"/>
<dbReference type="RGD" id="1565242">
    <property type="gene designation" value="Rufy3"/>
</dbReference>
<dbReference type="VEuPathDB" id="HostDB:ENSRNOG00000003428"/>
<dbReference type="eggNOG" id="KOG4381">
    <property type="taxonomic scope" value="Eukaryota"/>
</dbReference>
<dbReference type="HOGENOM" id="CLU_014576_0_0_1"/>
<dbReference type="InParanoid" id="Q5FVJ0"/>
<dbReference type="PRO" id="PR:Q5FVJ0"/>
<dbReference type="Proteomes" id="UP000002494">
    <property type="component" value="Chromosome 14"/>
</dbReference>
<dbReference type="Bgee" id="ENSRNOG00000003428">
    <property type="expression patterns" value="Expressed in cerebellum and 20 other cell types or tissues"/>
</dbReference>
<dbReference type="ExpressionAtlas" id="Q5FVJ0">
    <property type="expression patterns" value="baseline and differential"/>
</dbReference>
<dbReference type="GO" id="GO:0070161">
    <property type="term" value="C:anchoring junction"/>
    <property type="evidence" value="ECO:0007669"/>
    <property type="project" value="UniProtKB-KW"/>
</dbReference>
<dbReference type="GO" id="GO:0030424">
    <property type="term" value="C:axon"/>
    <property type="evidence" value="ECO:0000250"/>
    <property type="project" value="UniProtKB"/>
</dbReference>
<dbReference type="GO" id="GO:0005737">
    <property type="term" value="C:cytoplasm"/>
    <property type="evidence" value="ECO:0000250"/>
    <property type="project" value="UniProtKB"/>
</dbReference>
<dbReference type="GO" id="GO:0030425">
    <property type="term" value="C:dendrite"/>
    <property type="evidence" value="ECO:0000314"/>
    <property type="project" value="UniProtKB"/>
</dbReference>
<dbReference type="GO" id="GO:0036019">
    <property type="term" value="C:endolysosome"/>
    <property type="evidence" value="ECO:0000250"/>
    <property type="project" value="UniProtKB"/>
</dbReference>
<dbReference type="GO" id="GO:0030175">
    <property type="term" value="C:filopodium"/>
    <property type="evidence" value="ECO:0000314"/>
    <property type="project" value="HGNC-UCL"/>
</dbReference>
<dbReference type="GO" id="GO:0030426">
    <property type="term" value="C:growth cone"/>
    <property type="evidence" value="ECO:0000314"/>
    <property type="project" value="HGNC-UCL"/>
</dbReference>
<dbReference type="GO" id="GO:0030027">
    <property type="term" value="C:lamellipodium"/>
    <property type="evidence" value="ECO:0000314"/>
    <property type="project" value="UniProtKB"/>
</dbReference>
<dbReference type="GO" id="GO:0016020">
    <property type="term" value="C:membrane"/>
    <property type="evidence" value="ECO:0007669"/>
    <property type="project" value="UniProtKB-KW"/>
</dbReference>
<dbReference type="GO" id="GO:0043025">
    <property type="term" value="C:neuronal cell body"/>
    <property type="evidence" value="ECO:0000318"/>
    <property type="project" value="GO_Central"/>
</dbReference>
<dbReference type="GO" id="GO:0043204">
    <property type="term" value="C:perikaryon"/>
    <property type="evidence" value="ECO:0000314"/>
    <property type="project" value="UniProtKB"/>
</dbReference>
<dbReference type="GO" id="GO:0034452">
    <property type="term" value="F:dynactin binding"/>
    <property type="evidence" value="ECO:0000250"/>
    <property type="project" value="UniProtKB"/>
</dbReference>
<dbReference type="GO" id="GO:0007015">
    <property type="term" value="P:actin filament organization"/>
    <property type="evidence" value="ECO:0000250"/>
    <property type="project" value="UniProtKB"/>
</dbReference>
<dbReference type="GO" id="GO:0030154">
    <property type="term" value="P:cell differentiation"/>
    <property type="evidence" value="ECO:0007669"/>
    <property type="project" value="UniProtKB-KW"/>
</dbReference>
<dbReference type="GO" id="GO:0050771">
    <property type="term" value="P:negative regulation of axonogenesis"/>
    <property type="evidence" value="ECO:0000314"/>
    <property type="project" value="HGNC-UCL"/>
</dbReference>
<dbReference type="GO" id="GO:0007399">
    <property type="term" value="P:nervous system development"/>
    <property type="evidence" value="ECO:0007669"/>
    <property type="project" value="UniProtKB-KW"/>
</dbReference>
<dbReference type="GO" id="GO:0045773">
    <property type="term" value="P:positive regulation of axon extension"/>
    <property type="evidence" value="ECO:0000250"/>
    <property type="project" value="UniProtKB"/>
</dbReference>
<dbReference type="GO" id="GO:0050772">
    <property type="term" value="P:positive regulation of axonogenesis"/>
    <property type="evidence" value="ECO:0000266"/>
    <property type="project" value="RGD"/>
</dbReference>
<dbReference type="GO" id="GO:0030335">
    <property type="term" value="P:positive regulation of cell migration"/>
    <property type="evidence" value="ECO:0000250"/>
    <property type="project" value="UniProtKB"/>
</dbReference>
<dbReference type="GO" id="GO:0090316">
    <property type="term" value="P:positive regulation of intracellular protein transport"/>
    <property type="evidence" value="ECO:0000250"/>
    <property type="project" value="UniProtKB"/>
</dbReference>
<dbReference type="GO" id="GO:2001019">
    <property type="term" value="P:positive regulation of retrograde axon cargo transport"/>
    <property type="evidence" value="ECO:0000250"/>
    <property type="project" value="UniProtKB"/>
</dbReference>
<dbReference type="GO" id="GO:0050770">
    <property type="term" value="P:regulation of axonogenesis"/>
    <property type="evidence" value="ECO:0000266"/>
    <property type="project" value="RGD"/>
</dbReference>
<dbReference type="GO" id="GO:2000114">
    <property type="term" value="P:regulation of establishment of cell polarity"/>
    <property type="evidence" value="ECO:0000250"/>
    <property type="project" value="UniProtKB"/>
</dbReference>
<dbReference type="CDD" id="cd17696">
    <property type="entry name" value="RUN_RUFY3"/>
    <property type="match status" value="1"/>
</dbReference>
<dbReference type="FunFam" id="1.20.58.900:FF:000001">
    <property type="entry name" value="RUN and FYVE domain containing 2"/>
    <property type="match status" value="1"/>
</dbReference>
<dbReference type="FunFam" id="1.20.5.170:FF:000013">
    <property type="entry name" value="RUN and FYVE domain-containing 1"/>
    <property type="match status" value="1"/>
</dbReference>
<dbReference type="Gene3D" id="1.20.5.170">
    <property type="match status" value="1"/>
</dbReference>
<dbReference type="Gene3D" id="1.20.58.900">
    <property type="match status" value="1"/>
</dbReference>
<dbReference type="InterPro" id="IPR047335">
    <property type="entry name" value="RUFY1-3"/>
</dbReference>
<dbReference type="InterPro" id="IPR004012">
    <property type="entry name" value="Run_dom"/>
</dbReference>
<dbReference type="InterPro" id="IPR037213">
    <property type="entry name" value="Run_dom_sf"/>
</dbReference>
<dbReference type="InterPro" id="IPR047334">
    <property type="entry name" value="RUN_RUFY3"/>
</dbReference>
<dbReference type="PANTHER" id="PTHR45956:SF1">
    <property type="entry name" value="PROTEIN RUFY3"/>
    <property type="match status" value="1"/>
</dbReference>
<dbReference type="PANTHER" id="PTHR45956">
    <property type="entry name" value="RUN AND FYVE DOMAIN-CONTAINING PROTEIN 2-LIKE PROTEIN"/>
    <property type="match status" value="1"/>
</dbReference>
<dbReference type="Pfam" id="PF02759">
    <property type="entry name" value="RUN"/>
    <property type="match status" value="1"/>
</dbReference>
<dbReference type="SMART" id="SM00593">
    <property type="entry name" value="RUN"/>
    <property type="match status" value="1"/>
</dbReference>
<dbReference type="SUPFAM" id="SSF140741">
    <property type="entry name" value="RUN domain-like"/>
    <property type="match status" value="1"/>
</dbReference>
<dbReference type="PROSITE" id="PS50826">
    <property type="entry name" value="RUN"/>
    <property type="match status" value="1"/>
</dbReference>
<organism>
    <name type="scientific">Rattus norvegicus</name>
    <name type="common">Rat</name>
    <dbReference type="NCBI Taxonomy" id="10116"/>
    <lineage>
        <taxon>Eukaryota</taxon>
        <taxon>Metazoa</taxon>
        <taxon>Chordata</taxon>
        <taxon>Craniata</taxon>
        <taxon>Vertebrata</taxon>
        <taxon>Euteleostomi</taxon>
        <taxon>Mammalia</taxon>
        <taxon>Eutheria</taxon>
        <taxon>Euarchontoglires</taxon>
        <taxon>Glires</taxon>
        <taxon>Rodentia</taxon>
        <taxon>Myomorpha</taxon>
        <taxon>Muroidea</taxon>
        <taxon>Muridae</taxon>
        <taxon>Murinae</taxon>
        <taxon>Rattus</taxon>
    </lineage>
</organism>